<reference key="1">
    <citation type="journal article" date="2008" name="PLoS ONE">
        <title>Survival in nuclear waste, extreme resistance, and potential applications gleaned from the genome sequence of Kineococcus radiotolerans SRS30216.</title>
        <authorList>
            <person name="Bagwell C.E."/>
            <person name="Bhat S."/>
            <person name="Hawkins G.M."/>
            <person name="Smith B.W."/>
            <person name="Biswas T."/>
            <person name="Hoover T.R."/>
            <person name="Saunders E."/>
            <person name="Han C.S."/>
            <person name="Tsodikov O.V."/>
            <person name="Shimkets L.J."/>
        </authorList>
    </citation>
    <scope>NUCLEOTIDE SEQUENCE [LARGE SCALE GENOMIC DNA]</scope>
    <source>
        <strain>ATCC BAA-149 / DSM 14245 / SRS30216</strain>
    </source>
</reference>
<organism>
    <name type="scientific">Kineococcus radiotolerans (strain ATCC BAA-149 / DSM 14245 / SRS30216)</name>
    <dbReference type="NCBI Taxonomy" id="266940"/>
    <lineage>
        <taxon>Bacteria</taxon>
        <taxon>Bacillati</taxon>
        <taxon>Actinomycetota</taxon>
        <taxon>Actinomycetes</taxon>
        <taxon>Kineosporiales</taxon>
        <taxon>Kineosporiaceae</taxon>
        <taxon>Kineococcus</taxon>
    </lineage>
</organism>
<gene>
    <name evidence="1" type="primary">dnaA</name>
    <name type="ordered locus">Krad_0001</name>
</gene>
<keyword id="KW-0067">ATP-binding</keyword>
<keyword id="KW-0963">Cytoplasm</keyword>
<keyword id="KW-0235">DNA replication</keyword>
<keyword id="KW-0238">DNA-binding</keyword>
<keyword id="KW-0446">Lipid-binding</keyword>
<keyword id="KW-0547">Nucleotide-binding</keyword>
<keyword id="KW-1185">Reference proteome</keyword>
<sequence length="518" mass="57769">METDGGDFPSVWERALAQLDDGVTQHQRAFVRLTRPLGLLDGTALLAVPNDLTKDVIEQKVREPLTRALSEAYGSPIRLAVTVDPSIGQVLTPERTGEHSGGVGSVPSVERERGSVLTGLDGDDGLHLDERRSGSLEEDSPLDDSDPDLLFTGYKVDRGPGTGRQPRRPTTRIENSRLNPKYIFETFVIGASNRFAHAAAVAVAEAPAKAYNPLFIYGESGLGKTHLLHAIGHYAQNLYPGVQVRYVNSEEFTNDFINSIRDDKAQAFQRRHRDVDVLLIDDIQFLSNKVQTQEEFFHTFNTLHNASKQVVITSDLPPKQLSGFEERMRSRFEWGLITDVQPPDLETRIAILRKKAIGERLEVPDDVNEYIASKISSNIRELEGALIRVTAFASLNRQPVDMQLAEIVLRDLIPNEETPEITAAAIMGQTASYFSVTLEDLCGTSRSRTLVTARQIAMYLCRELTELSLPKIGQHFGGRDHTTVMHAERKIKQQMAERRSTYNQVTELTNRIKKQSGA</sequence>
<evidence type="ECO:0000255" key="1">
    <source>
        <dbReference type="HAMAP-Rule" id="MF_00377"/>
    </source>
</evidence>
<evidence type="ECO:0000256" key="2">
    <source>
        <dbReference type="SAM" id="MobiDB-lite"/>
    </source>
</evidence>
<name>DNAA_KINRD</name>
<dbReference type="EMBL" id="CP000750">
    <property type="protein sequence ID" value="ABS01493.1"/>
    <property type="molecule type" value="Genomic_DNA"/>
</dbReference>
<dbReference type="RefSeq" id="WP_012085692.1">
    <property type="nucleotide sequence ID" value="NC_009664.2"/>
</dbReference>
<dbReference type="SMR" id="A6W3V4"/>
<dbReference type="STRING" id="266940.Krad_0001"/>
<dbReference type="KEGG" id="kra:Krad_0001"/>
<dbReference type="eggNOG" id="COG0593">
    <property type="taxonomic scope" value="Bacteria"/>
</dbReference>
<dbReference type="HOGENOM" id="CLU_026910_2_0_11"/>
<dbReference type="OrthoDB" id="9807019at2"/>
<dbReference type="Proteomes" id="UP000001116">
    <property type="component" value="Chromosome"/>
</dbReference>
<dbReference type="GO" id="GO:0005737">
    <property type="term" value="C:cytoplasm"/>
    <property type="evidence" value="ECO:0007669"/>
    <property type="project" value="UniProtKB-SubCell"/>
</dbReference>
<dbReference type="GO" id="GO:0005886">
    <property type="term" value="C:plasma membrane"/>
    <property type="evidence" value="ECO:0007669"/>
    <property type="project" value="TreeGrafter"/>
</dbReference>
<dbReference type="GO" id="GO:0005524">
    <property type="term" value="F:ATP binding"/>
    <property type="evidence" value="ECO:0007669"/>
    <property type="project" value="UniProtKB-UniRule"/>
</dbReference>
<dbReference type="GO" id="GO:0016887">
    <property type="term" value="F:ATP hydrolysis activity"/>
    <property type="evidence" value="ECO:0007669"/>
    <property type="project" value="InterPro"/>
</dbReference>
<dbReference type="GO" id="GO:0003688">
    <property type="term" value="F:DNA replication origin binding"/>
    <property type="evidence" value="ECO:0007669"/>
    <property type="project" value="UniProtKB-UniRule"/>
</dbReference>
<dbReference type="GO" id="GO:0008289">
    <property type="term" value="F:lipid binding"/>
    <property type="evidence" value="ECO:0007669"/>
    <property type="project" value="UniProtKB-KW"/>
</dbReference>
<dbReference type="GO" id="GO:0006270">
    <property type="term" value="P:DNA replication initiation"/>
    <property type="evidence" value="ECO:0007669"/>
    <property type="project" value="UniProtKB-UniRule"/>
</dbReference>
<dbReference type="GO" id="GO:0006275">
    <property type="term" value="P:regulation of DNA replication"/>
    <property type="evidence" value="ECO:0007669"/>
    <property type="project" value="UniProtKB-UniRule"/>
</dbReference>
<dbReference type="CDD" id="cd00009">
    <property type="entry name" value="AAA"/>
    <property type="match status" value="1"/>
</dbReference>
<dbReference type="CDD" id="cd06571">
    <property type="entry name" value="Bac_DnaA_C"/>
    <property type="match status" value="1"/>
</dbReference>
<dbReference type="FunFam" id="1.10.1750.10:FF:000002">
    <property type="entry name" value="Chromosomal replication initiator protein DnaA"/>
    <property type="match status" value="1"/>
</dbReference>
<dbReference type="FunFam" id="1.10.8.60:FF:000003">
    <property type="entry name" value="Chromosomal replication initiator protein DnaA"/>
    <property type="match status" value="1"/>
</dbReference>
<dbReference type="FunFam" id="3.40.50.300:FF:000150">
    <property type="entry name" value="Chromosomal replication initiator protein DnaA"/>
    <property type="match status" value="1"/>
</dbReference>
<dbReference type="Gene3D" id="1.10.1750.10">
    <property type="match status" value="1"/>
</dbReference>
<dbReference type="Gene3D" id="1.10.8.60">
    <property type="match status" value="1"/>
</dbReference>
<dbReference type="Gene3D" id="3.30.300.180">
    <property type="match status" value="1"/>
</dbReference>
<dbReference type="Gene3D" id="3.40.50.300">
    <property type="entry name" value="P-loop containing nucleotide triphosphate hydrolases"/>
    <property type="match status" value="1"/>
</dbReference>
<dbReference type="HAMAP" id="MF_00377">
    <property type="entry name" value="DnaA_bact"/>
    <property type="match status" value="1"/>
</dbReference>
<dbReference type="InterPro" id="IPR003593">
    <property type="entry name" value="AAA+_ATPase"/>
</dbReference>
<dbReference type="InterPro" id="IPR001957">
    <property type="entry name" value="Chromosome_initiator_DnaA"/>
</dbReference>
<dbReference type="InterPro" id="IPR020591">
    <property type="entry name" value="Chromosome_initiator_DnaA-like"/>
</dbReference>
<dbReference type="InterPro" id="IPR018312">
    <property type="entry name" value="Chromosome_initiator_DnaA_CS"/>
</dbReference>
<dbReference type="InterPro" id="IPR013159">
    <property type="entry name" value="DnaA_C"/>
</dbReference>
<dbReference type="InterPro" id="IPR013317">
    <property type="entry name" value="DnaA_dom"/>
</dbReference>
<dbReference type="InterPro" id="IPR038454">
    <property type="entry name" value="DnaA_N_sf"/>
</dbReference>
<dbReference type="InterPro" id="IPR027417">
    <property type="entry name" value="P-loop_NTPase"/>
</dbReference>
<dbReference type="InterPro" id="IPR010921">
    <property type="entry name" value="Trp_repressor/repl_initiator"/>
</dbReference>
<dbReference type="NCBIfam" id="TIGR00362">
    <property type="entry name" value="DnaA"/>
    <property type="match status" value="1"/>
</dbReference>
<dbReference type="NCBIfam" id="NF010686">
    <property type="entry name" value="PRK14086.1"/>
    <property type="match status" value="1"/>
</dbReference>
<dbReference type="PANTHER" id="PTHR30050">
    <property type="entry name" value="CHROMOSOMAL REPLICATION INITIATOR PROTEIN DNAA"/>
    <property type="match status" value="1"/>
</dbReference>
<dbReference type="PANTHER" id="PTHR30050:SF2">
    <property type="entry name" value="CHROMOSOMAL REPLICATION INITIATOR PROTEIN DNAA"/>
    <property type="match status" value="1"/>
</dbReference>
<dbReference type="Pfam" id="PF00308">
    <property type="entry name" value="Bac_DnaA"/>
    <property type="match status" value="1"/>
</dbReference>
<dbReference type="Pfam" id="PF08299">
    <property type="entry name" value="Bac_DnaA_C"/>
    <property type="match status" value="1"/>
</dbReference>
<dbReference type="PRINTS" id="PR00051">
    <property type="entry name" value="DNAA"/>
</dbReference>
<dbReference type="SMART" id="SM00382">
    <property type="entry name" value="AAA"/>
    <property type="match status" value="1"/>
</dbReference>
<dbReference type="SMART" id="SM00760">
    <property type="entry name" value="Bac_DnaA_C"/>
    <property type="match status" value="1"/>
</dbReference>
<dbReference type="SUPFAM" id="SSF52540">
    <property type="entry name" value="P-loop containing nucleoside triphosphate hydrolases"/>
    <property type="match status" value="1"/>
</dbReference>
<dbReference type="SUPFAM" id="SSF48295">
    <property type="entry name" value="TrpR-like"/>
    <property type="match status" value="1"/>
</dbReference>
<dbReference type="PROSITE" id="PS01008">
    <property type="entry name" value="DNAA"/>
    <property type="match status" value="1"/>
</dbReference>
<accession>A6W3V4</accession>
<comment type="function">
    <text evidence="1">Plays an essential role in the initiation and regulation of chromosomal replication. ATP-DnaA binds to the origin of replication (oriC) to initiate formation of the DNA replication initiation complex once per cell cycle. Binds the DnaA box (a 9 base pair repeat at the origin) and separates the double-stranded (ds)DNA. Forms a right-handed helical filament on oriC DNA; dsDNA binds to the exterior of the filament while single-stranded (ss)DNA is stabiized in the filament's interior. The ATP-DnaA-oriC complex binds and stabilizes one strand of the AT-rich DNA unwinding element (DUE), permitting loading of DNA polymerase. After initiation quickly degrades to an ADP-DnaA complex that is not apt for DNA replication. Binds acidic phospholipids.</text>
</comment>
<comment type="subunit">
    <text evidence="1">Oligomerizes as a right-handed, spiral filament on DNA at oriC.</text>
</comment>
<comment type="subcellular location">
    <subcellularLocation>
        <location evidence="1">Cytoplasm</location>
    </subcellularLocation>
</comment>
<comment type="domain">
    <text evidence="1">Domain I is involved in oligomerization and binding regulators, domain II is flexibile and of varying length in different bacteria, domain III forms the AAA+ region, while domain IV binds dsDNA.</text>
</comment>
<comment type="similarity">
    <text evidence="1">Belongs to the DnaA family.</text>
</comment>
<protein>
    <recommendedName>
        <fullName evidence="1">Chromosomal replication initiator protein DnaA</fullName>
    </recommendedName>
</protein>
<proteinExistence type="inferred from homology"/>
<feature type="chain" id="PRO_1000079952" description="Chromosomal replication initiator protein DnaA">
    <location>
        <begin position="1"/>
        <end position="518"/>
    </location>
</feature>
<feature type="region of interest" description="Domain I, interacts with DnaA modulators" evidence="1">
    <location>
        <begin position="1"/>
        <end position="76"/>
    </location>
</feature>
<feature type="region of interest" description="Domain II" evidence="1">
    <location>
        <begin position="76"/>
        <end position="176"/>
    </location>
</feature>
<feature type="region of interest" description="Disordered" evidence="2">
    <location>
        <begin position="91"/>
        <end position="174"/>
    </location>
</feature>
<feature type="region of interest" description="Domain III, AAA+ region" evidence="1">
    <location>
        <begin position="177"/>
        <end position="393"/>
    </location>
</feature>
<feature type="region of interest" description="Domain IV, binds dsDNA" evidence="1">
    <location>
        <begin position="394"/>
        <end position="518"/>
    </location>
</feature>
<feature type="compositionally biased region" description="Basic and acidic residues" evidence="2">
    <location>
        <begin position="124"/>
        <end position="135"/>
    </location>
</feature>
<feature type="compositionally biased region" description="Acidic residues" evidence="2">
    <location>
        <begin position="136"/>
        <end position="147"/>
    </location>
</feature>
<feature type="binding site" evidence="1">
    <location>
        <position position="221"/>
    </location>
    <ligand>
        <name>ATP</name>
        <dbReference type="ChEBI" id="CHEBI:30616"/>
    </ligand>
</feature>
<feature type="binding site" evidence="1">
    <location>
        <position position="223"/>
    </location>
    <ligand>
        <name>ATP</name>
        <dbReference type="ChEBI" id="CHEBI:30616"/>
    </ligand>
</feature>
<feature type="binding site" evidence="1">
    <location>
        <position position="224"/>
    </location>
    <ligand>
        <name>ATP</name>
        <dbReference type="ChEBI" id="CHEBI:30616"/>
    </ligand>
</feature>
<feature type="binding site" evidence="1">
    <location>
        <position position="225"/>
    </location>
    <ligand>
        <name>ATP</name>
        <dbReference type="ChEBI" id="CHEBI:30616"/>
    </ligand>
</feature>